<reference key="1">
    <citation type="journal article" date="2002" name="Proc. Natl. Acad. Sci. U.S.A.">
        <title>The complete genome sequence of Chlorobium tepidum TLS, a photosynthetic, anaerobic, green-sulfur bacterium.</title>
        <authorList>
            <person name="Eisen J.A."/>
            <person name="Nelson K.E."/>
            <person name="Paulsen I.T."/>
            <person name="Heidelberg J.F."/>
            <person name="Wu M."/>
            <person name="Dodson R.J."/>
            <person name="DeBoy R.T."/>
            <person name="Gwinn M.L."/>
            <person name="Nelson W.C."/>
            <person name="Haft D.H."/>
            <person name="Hickey E.K."/>
            <person name="Peterson J.D."/>
            <person name="Durkin A.S."/>
            <person name="Kolonay J.F."/>
            <person name="Yang F."/>
            <person name="Holt I.E."/>
            <person name="Umayam L.A."/>
            <person name="Mason T.M."/>
            <person name="Brenner M."/>
            <person name="Shea T.P."/>
            <person name="Parksey D.S."/>
            <person name="Nierman W.C."/>
            <person name="Feldblyum T.V."/>
            <person name="Hansen C.L."/>
            <person name="Craven M.B."/>
            <person name="Radune D."/>
            <person name="Vamathevan J.J."/>
            <person name="Khouri H.M."/>
            <person name="White O."/>
            <person name="Gruber T.M."/>
            <person name="Ketchum K.A."/>
            <person name="Venter J.C."/>
            <person name="Tettelin H."/>
            <person name="Bryant D.A."/>
            <person name="Fraser C.M."/>
        </authorList>
    </citation>
    <scope>NUCLEOTIDE SEQUENCE [LARGE SCALE GENOMIC DNA]</scope>
    <source>
        <strain>ATCC 49652 / DSM 12025 / NBRC 103806 / TLS</strain>
    </source>
</reference>
<accession>Q8KAM6</accession>
<proteinExistence type="inferred from homology"/>
<comment type="catalytic activity">
    <reaction evidence="1">
        <text>tRNA(Phe) + L-phenylalanine + ATP = L-phenylalanyl-tRNA(Phe) + AMP + diphosphate + H(+)</text>
        <dbReference type="Rhea" id="RHEA:19413"/>
        <dbReference type="Rhea" id="RHEA-COMP:9668"/>
        <dbReference type="Rhea" id="RHEA-COMP:9699"/>
        <dbReference type="ChEBI" id="CHEBI:15378"/>
        <dbReference type="ChEBI" id="CHEBI:30616"/>
        <dbReference type="ChEBI" id="CHEBI:33019"/>
        <dbReference type="ChEBI" id="CHEBI:58095"/>
        <dbReference type="ChEBI" id="CHEBI:78442"/>
        <dbReference type="ChEBI" id="CHEBI:78531"/>
        <dbReference type="ChEBI" id="CHEBI:456215"/>
        <dbReference type="EC" id="6.1.1.20"/>
    </reaction>
</comment>
<comment type="cofactor">
    <cofactor evidence="1">
        <name>Mg(2+)</name>
        <dbReference type="ChEBI" id="CHEBI:18420"/>
    </cofactor>
    <text evidence="1">Binds 2 magnesium ions per tetramer.</text>
</comment>
<comment type="subunit">
    <text evidence="1">Tetramer of two alpha and two beta subunits.</text>
</comment>
<comment type="subcellular location">
    <subcellularLocation>
        <location evidence="1">Cytoplasm</location>
    </subcellularLocation>
</comment>
<comment type="similarity">
    <text evidence="1">Belongs to the class-II aminoacyl-tRNA synthetase family. Phe-tRNA synthetase alpha subunit type 1 subfamily.</text>
</comment>
<dbReference type="EC" id="6.1.1.20" evidence="1"/>
<dbReference type="EMBL" id="AE006470">
    <property type="protein sequence ID" value="AAM73346.1"/>
    <property type="molecule type" value="Genomic_DNA"/>
</dbReference>
<dbReference type="RefSeq" id="NP_663004.1">
    <property type="nucleotide sequence ID" value="NC_002932.3"/>
</dbReference>
<dbReference type="RefSeq" id="WP_010933784.1">
    <property type="nucleotide sequence ID" value="NC_002932.3"/>
</dbReference>
<dbReference type="SMR" id="Q8KAM6"/>
<dbReference type="STRING" id="194439.CT2130"/>
<dbReference type="EnsemblBacteria" id="AAM73346">
    <property type="protein sequence ID" value="AAM73346"/>
    <property type="gene ID" value="CT2130"/>
</dbReference>
<dbReference type="KEGG" id="cte:CT2130"/>
<dbReference type="PATRIC" id="fig|194439.7.peg.1931"/>
<dbReference type="eggNOG" id="COG0016">
    <property type="taxonomic scope" value="Bacteria"/>
</dbReference>
<dbReference type="HOGENOM" id="CLU_025086_0_1_10"/>
<dbReference type="OrthoDB" id="9800719at2"/>
<dbReference type="Proteomes" id="UP000001007">
    <property type="component" value="Chromosome"/>
</dbReference>
<dbReference type="GO" id="GO:0005737">
    <property type="term" value="C:cytoplasm"/>
    <property type="evidence" value="ECO:0007669"/>
    <property type="project" value="UniProtKB-SubCell"/>
</dbReference>
<dbReference type="GO" id="GO:0005524">
    <property type="term" value="F:ATP binding"/>
    <property type="evidence" value="ECO:0007669"/>
    <property type="project" value="UniProtKB-UniRule"/>
</dbReference>
<dbReference type="GO" id="GO:0000287">
    <property type="term" value="F:magnesium ion binding"/>
    <property type="evidence" value="ECO:0007669"/>
    <property type="project" value="UniProtKB-UniRule"/>
</dbReference>
<dbReference type="GO" id="GO:0004826">
    <property type="term" value="F:phenylalanine-tRNA ligase activity"/>
    <property type="evidence" value="ECO:0007669"/>
    <property type="project" value="UniProtKB-UniRule"/>
</dbReference>
<dbReference type="GO" id="GO:0000049">
    <property type="term" value="F:tRNA binding"/>
    <property type="evidence" value="ECO:0007669"/>
    <property type="project" value="InterPro"/>
</dbReference>
<dbReference type="GO" id="GO:0006432">
    <property type="term" value="P:phenylalanyl-tRNA aminoacylation"/>
    <property type="evidence" value="ECO:0007669"/>
    <property type="project" value="UniProtKB-UniRule"/>
</dbReference>
<dbReference type="CDD" id="cd00496">
    <property type="entry name" value="PheRS_alpha_core"/>
    <property type="match status" value="1"/>
</dbReference>
<dbReference type="Gene3D" id="3.30.930.10">
    <property type="entry name" value="Bira Bifunctional Protein, Domain 2"/>
    <property type="match status" value="1"/>
</dbReference>
<dbReference type="HAMAP" id="MF_00281">
    <property type="entry name" value="Phe_tRNA_synth_alpha1"/>
    <property type="match status" value="1"/>
</dbReference>
<dbReference type="InterPro" id="IPR006195">
    <property type="entry name" value="aa-tRNA-synth_II"/>
</dbReference>
<dbReference type="InterPro" id="IPR045864">
    <property type="entry name" value="aa-tRNA-synth_II/BPL/LPL"/>
</dbReference>
<dbReference type="InterPro" id="IPR004529">
    <property type="entry name" value="Phe-tRNA-synth_IIc_asu"/>
</dbReference>
<dbReference type="InterPro" id="IPR004188">
    <property type="entry name" value="Phe-tRNA_ligase_II_N"/>
</dbReference>
<dbReference type="InterPro" id="IPR022911">
    <property type="entry name" value="Phe_tRNA_ligase_alpha1_bac"/>
</dbReference>
<dbReference type="InterPro" id="IPR002319">
    <property type="entry name" value="Phenylalanyl-tRNA_Synthase"/>
</dbReference>
<dbReference type="InterPro" id="IPR010978">
    <property type="entry name" value="tRNA-bd_arm"/>
</dbReference>
<dbReference type="NCBIfam" id="TIGR00468">
    <property type="entry name" value="pheS"/>
    <property type="match status" value="1"/>
</dbReference>
<dbReference type="PANTHER" id="PTHR11538:SF41">
    <property type="entry name" value="PHENYLALANINE--TRNA LIGASE, MITOCHONDRIAL"/>
    <property type="match status" value="1"/>
</dbReference>
<dbReference type="PANTHER" id="PTHR11538">
    <property type="entry name" value="PHENYLALANYL-TRNA SYNTHETASE"/>
    <property type="match status" value="1"/>
</dbReference>
<dbReference type="Pfam" id="PF02912">
    <property type="entry name" value="Phe_tRNA-synt_N"/>
    <property type="match status" value="1"/>
</dbReference>
<dbReference type="Pfam" id="PF01409">
    <property type="entry name" value="tRNA-synt_2d"/>
    <property type="match status" value="1"/>
</dbReference>
<dbReference type="SUPFAM" id="SSF55681">
    <property type="entry name" value="Class II aaRS and biotin synthetases"/>
    <property type="match status" value="1"/>
</dbReference>
<dbReference type="SUPFAM" id="SSF46589">
    <property type="entry name" value="tRNA-binding arm"/>
    <property type="match status" value="1"/>
</dbReference>
<dbReference type="PROSITE" id="PS50862">
    <property type="entry name" value="AA_TRNA_LIGASE_II"/>
    <property type="match status" value="1"/>
</dbReference>
<keyword id="KW-0030">Aminoacyl-tRNA synthetase</keyword>
<keyword id="KW-0067">ATP-binding</keyword>
<keyword id="KW-0963">Cytoplasm</keyword>
<keyword id="KW-0436">Ligase</keyword>
<keyword id="KW-0460">Magnesium</keyword>
<keyword id="KW-0479">Metal-binding</keyword>
<keyword id="KW-0547">Nucleotide-binding</keyword>
<keyword id="KW-0648">Protein biosynthesis</keyword>
<keyword id="KW-1185">Reference proteome</keyword>
<organism>
    <name type="scientific">Chlorobaculum tepidum (strain ATCC 49652 / DSM 12025 / NBRC 103806 / TLS)</name>
    <name type="common">Chlorobium tepidum</name>
    <dbReference type="NCBI Taxonomy" id="194439"/>
    <lineage>
        <taxon>Bacteria</taxon>
        <taxon>Pseudomonadati</taxon>
        <taxon>Chlorobiota</taxon>
        <taxon>Chlorobiia</taxon>
        <taxon>Chlorobiales</taxon>
        <taxon>Chlorobiaceae</taxon>
        <taxon>Chlorobaculum</taxon>
    </lineage>
</organism>
<name>SYFA_CHLTE</name>
<protein>
    <recommendedName>
        <fullName evidence="1">Phenylalanine--tRNA ligase alpha subunit</fullName>
        <ecNumber evidence="1">6.1.1.20</ecNumber>
    </recommendedName>
    <alternativeName>
        <fullName evidence="1">Phenylalanyl-tRNA synthetase alpha subunit</fullName>
        <shortName evidence="1">PheRS</shortName>
    </alternativeName>
</protein>
<feature type="chain" id="PRO_0000126688" description="Phenylalanine--tRNA ligase alpha subunit">
    <location>
        <begin position="1"/>
        <end position="341"/>
    </location>
</feature>
<feature type="binding site" evidence="1">
    <location>
        <position position="254"/>
    </location>
    <ligand>
        <name>Mg(2+)</name>
        <dbReference type="ChEBI" id="CHEBI:18420"/>
        <note>shared with beta subunit</note>
    </ligand>
</feature>
<evidence type="ECO:0000255" key="1">
    <source>
        <dbReference type="HAMAP-Rule" id="MF_00281"/>
    </source>
</evidence>
<sequence>METSIQQLQQEIDGYQIRNAKELEAFKLEFTVRKGKIAGLFGQLKTVDSADRPRIGQLLNALKLSAEAKVADAESLFAQNAETEAPALDLSLPGRRSFLGSEHPVQKVLGDMKRIFTAMGFGIATGPELELDEYNFDRLNFPPNHPARDMQDTFFITRGQEEGDVLLRTHTSPVQVRVMLDEKPPIRVICPGKVYRNEAISARSYCVFHQLEGLYIDKNVSFADLKATIYSFARQMFGSDVKLRFRPSFFPFTEPSAEVDVTCYLCGGKGCRVCKKSGWLEIMGCGMVHPNVMRNCGIDPEEWTGYAFGMGVDRTALLRYKIDDIRLFFENDVRMLSQFMA</sequence>
<gene>
    <name evidence="1" type="primary">pheS</name>
    <name type="ordered locus">CT2130</name>
</gene>